<proteinExistence type="inferred from homology"/>
<protein>
    <recommendedName>
        <fullName evidence="1">Uroporphyrinogen decarboxylase</fullName>
        <shortName evidence="1">UPD</shortName>
        <shortName evidence="1">URO-D</shortName>
        <ecNumber evidence="1">4.1.1.37</ecNumber>
    </recommendedName>
</protein>
<sequence>MPQSATKPFIDVLSGQRQAIPPMWMMRQAGRYLPEYREVRAKAGGFLDLCFNPELAAEVTLQPIRRFGFDAAIIFSDILVIPYALGRSVRFEVGEGPRLEPLDDPAKVATLAPRADFGKLAPVFDALKIVRGALDPKTALIGFCGAPWTVATYMVAGHGTPDQAPARMMAYRHPDAFAKIIDVLVDNSIEYLLAQLAAGANALQIFDTWAGVLPPAEFARWSVEPTRRIVEGVRAKVPDAKIIGFPRGAGAQLPGYVEATGVNGVSIDWTAEPAFIRERVQSRVAVQGNLDPLVLITGGAALDRAVDNVLANFAQGRFIFNLGHGIQPETPIAHVEQMLKRVRG</sequence>
<name>DCUP_BRADU</name>
<feature type="chain" id="PRO_0000187588" description="Uroporphyrinogen decarboxylase">
    <location>
        <begin position="1"/>
        <end position="344"/>
    </location>
</feature>
<feature type="binding site" evidence="1">
    <location>
        <begin position="27"/>
        <end position="31"/>
    </location>
    <ligand>
        <name>substrate</name>
    </ligand>
</feature>
<feature type="binding site" evidence="1">
    <location>
        <position position="46"/>
    </location>
    <ligand>
        <name>substrate</name>
    </ligand>
</feature>
<feature type="binding site" evidence="1">
    <location>
        <position position="77"/>
    </location>
    <ligand>
        <name>substrate</name>
    </ligand>
</feature>
<feature type="binding site" evidence="1">
    <location>
        <position position="153"/>
    </location>
    <ligand>
        <name>substrate</name>
    </ligand>
</feature>
<feature type="binding site" evidence="1">
    <location>
        <position position="208"/>
    </location>
    <ligand>
        <name>substrate</name>
    </ligand>
</feature>
<feature type="binding site" evidence="1">
    <location>
        <position position="324"/>
    </location>
    <ligand>
        <name>substrate</name>
    </ligand>
</feature>
<feature type="site" description="Transition state stabilizer" evidence="1">
    <location>
        <position position="77"/>
    </location>
</feature>
<organism>
    <name type="scientific">Bradyrhizobium diazoefficiens (strain JCM 10833 / BCRC 13528 / IAM 13628 / NBRC 14792 / USDA 110)</name>
    <dbReference type="NCBI Taxonomy" id="224911"/>
    <lineage>
        <taxon>Bacteria</taxon>
        <taxon>Pseudomonadati</taxon>
        <taxon>Pseudomonadota</taxon>
        <taxon>Alphaproteobacteria</taxon>
        <taxon>Hyphomicrobiales</taxon>
        <taxon>Nitrobacteraceae</taxon>
        <taxon>Bradyrhizobium</taxon>
    </lineage>
</organism>
<keyword id="KW-0963">Cytoplasm</keyword>
<keyword id="KW-0210">Decarboxylase</keyword>
<keyword id="KW-0456">Lyase</keyword>
<keyword id="KW-0627">Porphyrin biosynthesis</keyword>
<keyword id="KW-1185">Reference proteome</keyword>
<reference key="1">
    <citation type="journal article" date="2002" name="DNA Res.">
        <title>Complete genomic sequence of nitrogen-fixing symbiotic bacterium Bradyrhizobium japonicum USDA110.</title>
        <authorList>
            <person name="Kaneko T."/>
            <person name="Nakamura Y."/>
            <person name="Sato S."/>
            <person name="Minamisawa K."/>
            <person name="Uchiumi T."/>
            <person name="Sasamoto S."/>
            <person name="Watanabe A."/>
            <person name="Idesawa K."/>
            <person name="Iriguchi M."/>
            <person name="Kawashima K."/>
            <person name="Kohara M."/>
            <person name="Matsumoto M."/>
            <person name="Shimpo S."/>
            <person name="Tsuruoka H."/>
            <person name="Wada T."/>
            <person name="Yamada M."/>
            <person name="Tabata S."/>
        </authorList>
    </citation>
    <scope>NUCLEOTIDE SEQUENCE [LARGE SCALE GENOMIC DNA]</scope>
    <source>
        <strain>JCM 10833 / BCRC 13528 / IAM 13628 / NBRC 14792 / USDA 110</strain>
    </source>
</reference>
<evidence type="ECO:0000255" key="1">
    <source>
        <dbReference type="HAMAP-Rule" id="MF_00218"/>
    </source>
</evidence>
<dbReference type="EC" id="4.1.1.37" evidence="1"/>
<dbReference type="EMBL" id="BA000040">
    <property type="protein sequence ID" value="BAC47664.1"/>
    <property type="molecule type" value="Genomic_DNA"/>
</dbReference>
<dbReference type="RefSeq" id="NP_769039.1">
    <property type="nucleotide sequence ID" value="NC_004463.1"/>
</dbReference>
<dbReference type="RefSeq" id="WP_011085186.1">
    <property type="nucleotide sequence ID" value="NC_004463.1"/>
</dbReference>
<dbReference type="SMR" id="Q89SK1"/>
<dbReference type="FunCoup" id="Q89SK1">
    <property type="interactions" value="676"/>
</dbReference>
<dbReference type="STRING" id="224911.AAV28_08900"/>
<dbReference type="EnsemblBacteria" id="BAC47664">
    <property type="protein sequence ID" value="BAC47664"/>
    <property type="gene ID" value="BAC47664"/>
</dbReference>
<dbReference type="GeneID" id="46489438"/>
<dbReference type="KEGG" id="bja:bll2399"/>
<dbReference type="PATRIC" id="fig|224911.44.peg.1959"/>
<dbReference type="eggNOG" id="COG0407">
    <property type="taxonomic scope" value="Bacteria"/>
</dbReference>
<dbReference type="HOGENOM" id="CLU_040933_0_0_5"/>
<dbReference type="InParanoid" id="Q89SK1"/>
<dbReference type="OrthoDB" id="9806656at2"/>
<dbReference type="PhylomeDB" id="Q89SK1"/>
<dbReference type="UniPathway" id="UPA00251">
    <property type="reaction ID" value="UER00321"/>
</dbReference>
<dbReference type="Proteomes" id="UP000002526">
    <property type="component" value="Chromosome"/>
</dbReference>
<dbReference type="GO" id="GO:0005829">
    <property type="term" value="C:cytosol"/>
    <property type="evidence" value="ECO:0000318"/>
    <property type="project" value="GO_Central"/>
</dbReference>
<dbReference type="GO" id="GO:0004853">
    <property type="term" value="F:uroporphyrinogen decarboxylase activity"/>
    <property type="evidence" value="ECO:0000318"/>
    <property type="project" value="GO_Central"/>
</dbReference>
<dbReference type="GO" id="GO:0006783">
    <property type="term" value="P:heme biosynthetic process"/>
    <property type="evidence" value="ECO:0000318"/>
    <property type="project" value="GO_Central"/>
</dbReference>
<dbReference type="GO" id="GO:0019353">
    <property type="term" value="P:protoporphyrinogen IX biosynthetic process from glutamate"/>
    <property type="evidence" value="ECO:0000318"/>
    <property type="project" value="GO_Central"/>
</dbReference>
<dbReference type="CDD" id="cd00717">
    <property type="entry name" value="URO-D"/>
    <property type="match status" value="1"/>
</dbReference>
<dbReference type="FunFam" id="3.20.20.210:FF:000007">
    <property type="entry name" value="Uroporphyrinogen decarboxylase"/>
    <property type="match status" value="1"/>
</dbReference>
<dbReference type="Gene3D" id="3.20.20.210">
    <property type="match status" value="1"/>
</dbReference>
<dbReference type="HAMAP" id="MF_00218">
    <property type="entry name" value="URO_D"/>
    <property type="match status" value="1"/>
</dbReference>
<dbReference type="InterPro" id="IPR038071">
    <property type="entry name" value="UROD/MetE-like_sf"/>
</dbReference>
<dbReference type="InterPro" id="IPR006361">
    <property type="entry name" value="Uroporphyrinogen_deCO2ase_HemE"/>
</dbReference>
<dbReference type="InterPro" id="IPR000257">
    <property type="entry name" value="Uroporphyrinogen_deCOase"/>
</dbReference>
<dbReference type="NCBIfam" id="TIGR01464">
    <property type="entry name" value="hemE"/>
    <property type="match status" value="1"/>
</dbReference>
<dbReference type="PANTHER" id="PTHR21091">
    <property type="entry name" value="METHYLTETRAHYDROFOLATE:HOMOCYSTEINE METHYLTRANSFERASE RELATED"/>
    <property type="match status" value="1"/>
</dbReference>
<dbReference type="PANTHER" id="PTHR21091:SF169">
    <property type="entry name" value="UROPORPHYRINOGEN DECARBOXYLASE"/>
    <property type="match status" value="1"/>
</dbReference>
<dbReference type="Pfam" id="PF01208">
    <property type="entry name" value="URO-D"/>
    <property type="match status" value="1"/>
</dbReference>
<dbReference type="SUPFAM" id="SSF51726">
    <property type="entry name" value="UROD/MetE-like"/>
    <property type="match status" value="1"/>
</dbReference>
<dbReference type="PROSITE" id="PS00906">
    <property type="entry name" value="UROD_1"/>
    <property type="match status" value="1"/>
</dbReference>
<dbReference type="PROSITE" id="PS00907">
    <property type="entry name" value="UROD_2"/>
    <property type="match status" value="1"/>
</dbReference>
<gene>
    <name evidence="1" type="primary">hemE</name>
    <name type="ordered locus">bll2399</name>
</gene>
<accession>Q89SK1</accession>
<comment type="function">
    <text evidence="1">Catalyzes the decarboxylation of four acetate groups of uroporphyrinogen-III to yield coproporphyrinogen-III.</text>
</comment>
<comment type="catalytic activity">
    <reaction evidence="1">
        <text>uroporphyrinogen III + 4 H(+) = coproporphyrinogen III + 4 CO2</text>
        <dbReference type="Rhea" id="RHEA:19865"/>
        <dbReference type="ChEBI" id="CHEBI:15378"/>
        <dbReference type="ChEBI" id="CHEBI:16526"/>
        <dbReference type="ChEBI" id="CHEBI:57308"/>
        <dbReference type="ChEBI" id="CHEBI:57309"/>
        <dbReference type="EC" id="4.1.1.37"/>
    </reaction>
</comment>
<comment type="pathway">
    <text evidence="1">Porphyrin-containing compound metabolism; protoporphyrin-IX biosynthesis; coproporphyrinogen-III from 5-aminolevulinate: step 4/4.</text>
</comment>
<comment type="subunit">
    <text evidence="1">Homodimer.</text>
</comment>
<comment type="subcellular location">
    <subcellularLocation>
        <location evidence="1">Cytoplasm</location>
    </subcellularLocation>
</comment>
<comment type="similarity">
    <text evidence="1">Belongs to the uroporphyrinogen decarboxylase family.</text>
</comment>